<sequence length="397" mass="43205">MSKIIAINAGSSSLKFQLFEMPSETVLTKGLVERIGLEDSIFTITVDGEKQKEITNIPDHAVAVNMLLKKLTENGIVKSLDEIGGIGHRVVHGGEKFADSVLITDEVLADIEELSDLAPLHNPANVVGIKAFQEVLPNVPAVAVFDTAFHQTMPESAFLYSLPYEYYEKFGIRKYGFHGTSHKYVTERAAELLGRPLESLSLLSCHLGNGASIAAVEGGKSIDTSMGFTPLAGVTMGTRSGNIDPALIPYIMEKTGQTVEEVVSVLNKKSGMLGLTGYSSDLRDIIAKEEEGDHRAKVALDVFVSRIHKYIGSYTARMKGVDAIIFTAGVGENSAIIRERVLEGLEYMGVYFDAKRNNVFGEEAFINFPHSPVKIIVIPTDEEVMIARDVLRLGNIG</sequence>
<organism>
    <name type="scientific">Bacillus anthracis</name>
    <dbReference type="NCBI Taxonomy" id="1392"/>
    <lineage>
        <taxon>Bacteria</taxon>
        <taxon>Bacillati</taxon>
        <taxon>Bacillota</taxon>
        <taxon>Bacilli</taxon>
        <taxon>Bacillales</taxon>
        <taxon>Bacillaceae</taxon>
        <taxon>Bacillus</taxon>
        <taxon>Bacillus cereus group</taxon>
    </lineage>
</organism>
<proteinExistence type="inferred from homology"/>
<accession>Q81KV0</accession>
<accession>Q6HSA6</accession>
<accession>Q6KLK3</accession>
<gene>
    <name evidence="1" type="primary">ackA</name>
    <name type="ordered locus">BA_4888</name>
    <name type="ordered locus">GBAA_4888</name>
    <name type="ordered locus">BAS4535</name>
</gene>
<comment type="function">
    <text evidence="1">Catalyzes the formation of acetyl phosphate from acetate and ATP. Can also catalyze the reverse reaction.</text>
</comment>
<comment type="catalytic activity">
    <reaction evidence="1">
        <text>acetate + ATP = acetyl phosphate + ADP</text>
        <dbReference type="Rhea" id="RHEA:11352"/>
        <dbReference type="ChEBI" id="CHEBI:22191"/>
        <dbReference type="ChEBI" id="CHEBI:30089"/>
        <dbReference type="ChEBI" id="CHEBI:30616"/>
        <dbReference type="ChEBI" id="CHEBI:456216"/>
        <dbReference type="EC" id="2.7.2.1"/>
    </reaction>
</comment>
<comment type="cofactor">
    <cofactor evidence="1">
        <name>Mg(2+)</name>
        <dbReference type="ChEBI" id="CHEBI:18420"/>
    </cofactor>
    <cofactor evidence="1">
        <name>Mn(2+)</name>
        <dbReference type="ChEBI" id="CHEBI:29035"/>
    </cofactor>
    <text evidence="1">Mg(2+). Can also accept Mn(2+).</text>
</comment>
<comment type="pathway">
    <text evidence="1">Metabolic intermediate biosynthesis; acetyl-CoA biosynthesis; acetyl-CoA from acetate: step 1/2.</text>
</comment>
<comment type="subunit">
    <text evidence="1">Homodimer.</text>
</comment>
<comment type="subcellular location">
    <subcellularLocation>
        <location evidence="1">Cytoplasm</location>
    </subcellularLocation>
</comment>
<comment type="similarity">
    <text evidence="1">Belongs to the acetokinase family.</text>
</comment>
<reference key="1">
    <citation type="journal article" date="2003" name="Nature">
        <title>The genome sequence of Bacillus anthracis Ames and comparison to closely related bacteria.</title>
        <authorList>
            <person name="Read T.D."/>
            <person name="Peterson S.N."/>
            <person name="Tourasse N.J."/>
            <person name="Baillie L.W."/>
            <person name="Paulsen I.T."/>
            <person name="Nelson K.E."/>
            <person name="Tettelin H."/>
            <person name="Fouts D.E."/>
            <person name="Eisen J.A."/>
            <person name="Gill S.R."/>
            <person name="Holtzapple E.K."/>
            <person name="Okstad O.A."/>
            <person name="Helgason E."/>
            <person name="Rilstone J."/>
            <person name="Wu M."/>
            <person name="Kolonay J.F."/>
            <person name="Beanan M.J."/>
            <person name="Dodson R.J."/>
            <person name="Brinkac L.M."/>
            <person name="Gwinn M.L."/>
            <person name="DeBoy R.T."/>
            <person name="Madpu R."/>
            <person name="Daugherty S.C."/>
            <person name="Durkin A.S."/>
            <person name="Haft D.H."/>
            <person name="Nelson W.C."/>
            <person name="Peterson J.D."/>
            <person name="Pop M."/>
            <person name="Khouri H.M."/>
            <person name="Radune D."/>
            <person name="Benton J.L."/>
            <person name="Mahamoud Y."/>
            <person name="Jiang L."/>
            <person name="Hance I.R."/>
            <person name="Weidman J.F."/>
            <person name="Berry K.J."/>
            <person name="Plaut R.D."/>
            <person name="Wolf A.M."/>
            <person name="Watkins K.L."/>
            <person name="Nierman W.C."/>
            <person name="Hazen A."/>
            <person name="Cline R.T."/>
            <person name="Redmond C."/>
            <person name="Thwaite J.E."/>
            <person name="White O."/>
            <person name="Salzberg S.L."/>
            <person name="Thomason B."/>
            <person name="Friedlander A.M."/>
            <person name="Koehler T.M."/>
            <person name="Hanna P.C."/>
            <person name="Kolstoe A.-B."/>
            <person name="Fraser C.M."/>
        </authorList>
    </citation>
    <scope>NUCLEOTIDE SEQUENCE [LARGE SCALE GENOMIC DNA]</scope>
    <source>
        <strain>Ames / isolate Porton</strain>
    </source>
</reference>
<reference key="2">
    <citation type="journal article" date="2009" name="J. Bacteriol.">
        <title>The complete genome sequence of Bacillus anthracis Ames 'Ancestor'.</title>
        <authorList>
            <person name="Ravel J."/>
            <person name="Jiang L."/>
            <person name="Stanley S.T."/>
            <person name="Wilson M.R."/>
            <person name="Decker R.S."/>
            <person name="Read T.D."/>
            <person name="Worsham P."/>
            <person name="Keim P.S."/>
            <person name="Salzberg S.L."/>
            <person name="Fraser-Liggett C.M."/>
            <person name="Rasko D.A."/>
        </authorList>
    </citation>
    <scope>NUCLEOTIDE SEQUENCE [LARGE SCALE GENOMIC DNA]</scope>
    <source>
        <strain>Ames ancestor</strain>
    </source>
</reference>
<reference key="3">
    <citation type="submission" date="2004-01" db="EMBL/GenBank/DDBJ databases">
        <title>Complete genome sequence of Bacillus anthracis Sterne.</title>
        <authorList>
            <person name="Brettin T.S."/>
            <person name="Bruce D."/>
            <person name="Challacombe J.F."/>
            <person name="Gilna P."/>
            <person name="Han C."/>
            <person name="Hill K."/>
            <person name="Hitchcock P."/>
            <person name="Jackson P."/>
            <person name="Keim P."/>
            <person name="Longmire J."/>
            <person name="Lucas S."/>
            <person name="Okinaka R."/>
            <person name="Richardson P."/>
            <person name="Rubin E."/>
            <person name="Tice H."/>
        </authorList>
    </citation>
    <scope>NUCLEOTIDE SEQUENCE [LARGE SCALE GENOMIC DNA]</scope>
    <source>
        <strain>Sterne</strain>
    </source>
</reference>
<dbReference type="EC" id="2.7.2.1" evidence="1"/>
<dbReference type="EMBL" id="AE016879">
    <property type="protein sequence ID" value="AAP28574.1"/>
    <property type="molecule type" value="Genomic_DNA"/>
</dbReference>
<dbReference type="EMBL" id="AE017334">
    <property type="protein sequence ID" value="AAT34007.1"/>
    <property type="molecule type" value="Genomic_DNA"/>
</dbReference>
<dbReference type="EMBL" id="AE017225">
    <property type="protein sequence ID" value="AAT56832.1"/>
    <property type="molecule type" value="Genomic_DNA"/>
</dbReference>
<dbReference type="RefSeq" id="NP_847088.1">
    <property type="nucleotide sequence ID" value="NC_003997.3"/>
</dbReference>
<dbReference type="RefSeq" id="WP_000034579.1">
    <property type="nucleotide sequence ID" value="NZ_WXXJ01000026.1"/>
</dbReference>
<dbReference type="RefSeq" id="YP_030782.1">
    <property type="nucleotide sequence ID" value="NC_005945.1"/>
</dbReference>
<dbReference type="SMR" id="Q81KV0"/>
<dbReference type="IntAct" id="Q81KV0">
    <property type="interactions" value="1"/>
</dbReference>
<dbReference type="STRING" id="261594.GBAA_4888"/>
<dbReference type="DNASU" id="1086751"/>
<dbReference type="GeneID" id="45024510"/>
<dbReference type="KEGG" id="ban:BA_4888"/>
<dbReference type="KEGG" id="bar:GBAA_4888"/>
<dbReference type="KEGG" id="bat:BAS4535"/>
<dbReference type="PATRIC" id="fig|198094.11.peg.4849"/>
<dbReference type="eggNOG" id="COG0282">
    <property type="taxonomic scope" value="Bacteria"/>
</dbReference>
<dbReference type="HOGENOM" id="CLU_020352_0_1_9"/>
<dbReference type="OMA" id="HKYVSQR"/>
<dbReference type="OrthoDB" id="9802453at2"/>
<dbReference type="UniPathway" id="UPA00340">
    <property type="reaction ID" value="UER00458"/>
</dbReference>
<dbReference type="Proteomes" id="UP000000427">
    <property type="component" value="Chromosome"/>
</dbReference>
<dbReference type="Proteomes" id="UP000000594">
    <property type="component" value="Chromosome"/>
</dbReference>
<dbReference type="GO" id="GO:0005737">
    <property type="term" value="C:cytoplasm"/>
    <property type="evidence" value="ECO:0007669"/>
    <property type="project" value="UniProtKB-SubCell"/>
</dbReference>
<dbReference type="GO" id="GO:0008776">
    <property type="term" value="F:acetate kinase activity"/>
    <property type="evidence" value="ECO:0007669"/>
    <property type="project" value="UniProtKB-UniRule"/>
</dbReference>
<dbReference type="GO" id="GO:0005524">
    <property type="term" value="F:ATP binding"/>
    <property type="evidence" value="ECO:0007669"/>
    <property type="project" value="UniProtKB-KW"/>
</dbReference>
<dbReference type="GO" id="GO:0000287">
    <property type="term" value="F:magnesium ion binding"/>
    <property type="evidence" value="ECO:0007669"/>
    <property type="project" value="UniProtKB-UniRule"/>
</dbReference>
<dbReference type="GO" id="GO:0006083">
    <property type="term" value="P:acetate metabolic process"/>
    <property type="evidence" value="ECO:0007669"/>
    <property type="project" value="TreeGrafter"/>
</dbReference>
<dbReference type="GO" id="GO:0006085">
    <property type="term" value="P:acetyl-CoA biosynthetic process"/>
    <property type="evidence" value="ECO:0007669"/>
    <property type="project" value="UniProtKB-UniRule"/>
</dbReference>
<dbReference type="CDD" id="cd24010">
    <property type="entry name" value="ASKHA_NBD_AcK_PK"/>
    <property type="match status" value="1"/>
</dbReference>
<dbReference type="Gene3D" id="3.30.420.40">
    <property type="match status" value="2"/>
</dbReference>
<dbReference type="HAMAP" id="MF_00020">
    <property type="entry name" value="Acetate_kinase"/>
    <property type="match status" value="1"/>
</dbReference>
<dbReference type="InterPro" id="IPR004372">
    <property type="entry name" value="Ac/propionate_kinase"/>
</dbReference>
<dbReference type="InterPro" id="IPR000890">
    <property type="entry name" value="Aliphatic_acid_kin_short-chain"/>
</dbReference>
<dbReference type="InterPro" id="IPR023865">
    <property type="entry name" value="Aliphatic_acid_kinase_CS"/>
</dbReference>
<dbReference type="InterPro" id="IPR043129">
    <property type="entry name" value="ATPase_NBD"/>
</dbReference>
<dbReference type="NCBIfam" id="TIGR00016">
    <property type="entry name" value="ackA"/>
    <property type="match status" value="1"/>
</dbReference>
<dbReference type="PANTHER" id="PTHR21060">
    <property type="entry name" value="ACETATE KINASE"/>
    <property type="match status" value="1"/>
</dbReference>
<dbReference type="PANTHER" id="PTHR21060:SF15">
    <property type="entry name" value="ACETATE KINASE-RELATED"/>
    <property type="match status" value="1"/>
</dbReference>
<dbReference type="Pfam" id="PF00871">
    <property type="entry name" value="Acetate_kinase"/>
    <property type="match status" value="1"/>
</dbReference>
<dbReference type="PIRSF" id="PIRSF000722">
    <property type="entry name" value="Acetate_prop_kin"/>
    <property type="match status" value="1"/>
</dbReference>
<dbReference type="PRINTS" id="PR00471">
    <property type="entry name" value="ACETATEKNASE"/>
</dbReference>
<dbReference type="SUPFAM" id="SSF53067">
    <property type="entry name" value="Actin-like ATPase domain"/>
    <property type="match status" value="2"/>
</dbReference>
<dbReference type="PROSITE" id="PS01075">
    <property type="entry name" value="ACETATE_KINASE_1"/>
    <property type="match status" value="1"/>
</dbReference>
<dbReference type="PROSITE" id="PS01076">
    <property type="entry name" value="ACETATE_KINASE_2"/>
    <property type="match status" value="1"/>
</dbReference>
<protein>
    <recommendedName>
        <fullName evidence="1">Acetate kinase</fullName>
        <ecNumber evidence="1">2.7.2.1</ecNumber>
    </recommendedName>
    <alternativeName>
        <fullName evidence="1">Acetokinase</fullName>
    </alternativeName>
</protein>
<name>ACKA_BACAN</name>
<feature type="chain" id="PRO_0000107525" description="Acetate kinase">
    <location>
        <begin position="1"/>
        <end position="397"/>
    </location>
</feature>
<feature type="active site" description="Proton donor/acceptor" evidence="1">
    <location>
        <position position="146"/>
    </location>
</feature>
<feature type="binding site" evidence="1">
    <location>
        <position position="8"/>
    </location>
    <ligand>
        <name>Mg(2+)</name>
        <dbReference type="ChEBI" id="CHEBI:18420"/>
    </ligand>
</feature>
<feature type="binding site" evidence="1">
    <location>
        <position position="15"/>
    </location>
    <ligand>
        <name>ATP</name>
        <dbReference type="ChEBI" id="CHEBI:30616"/>
    </ligand>
</feature>
<feature type="binding site" evidence="1">
    <location>
        <position position="89"/>
    </location>
    <ligand>
        <name>substrate</name>
    </ligand>
</feature>
<feature type="binding site" evidence="1">
    <location>
        <begin position="206"/>
        <end position="210"/>
    </location>
    <ligand>
        <name>ATP</name>
        <dbReference type="ChEBI" id="CHEBI:30616"/>
    </ligand>
</feature>
<feature type="binding site" evidence="1">
    <location>
        <begin position="281"/>
        <end position="283"/>
    </location>
    <ligand>
        <name>ATP</name>
        <dbReference type="ChEBI" id="CHEBI:30616"/>
    </ligand>
</feature>
<feature type="binding site" evidence="1">
    <location>
        <begin position="329"/>
        <end position="333"/>
    </location>
    <ligand>
        <name>ATP</name>
        <dbReference type="ChEBI" id="CHEBI:30616"/>
    </ligand>
</feature>
<feature type="binding site" evidence="1">
    <location>
        <position position="382"/>
    </location>
    <ligand>
        <name>Mg(2+)</name>
        <dbReference type="ChEBI" id="CHEBI:18420"/>
    </ligand>
</feature>
<feature type="site" description="Transition state stabilizer" evidence="1">
    <location>
        <position position="178"/>
    </location>
</feature>
<feature type="site" description="Transition state stabilizer" evidence="1">
    <location>
        <position position="239"/>
    </location>
</feature>
<keyword id="KW-0067">ATP-binding</keyword>
<keyword id="KW-0963">Cytoplasm</keyword>
<keyword id="KW-0418">Kinase</keyword>
<keyword id="KW-0460">Magnesium</keyword>
<keyword id="KW-0479">Metal-binding</keyword>
<keyword id="KW-0547">Nucleotide-binding</keyword>
<keyword id="KW-1185">Reference proteome</keyword>
<keyword id="KW-0808">Transferase</keyword>
<evidence type="ECO:0000255" key="1">
    <source>
        <dbReference type="HAMAP-Rule" id="MF_00020"/>
    </source>
</evidence>